<dbReference type="EC" id="3.4.13.19" evidence="7 8"/>
<dbReference type="EC" id="3.5.2.6" evidence="7"/>
<dbReference type="EMBL" id="D13139">
    <property type="protein sequence ID" value="BAA02432.1"/>
    <property type="molecule type" value="mRNA"/>
</dbReference>
<dbReference type="EMBL" id="AC163617">
    <property type="status" value="NOT_ANNOTATED_CDS"/>
    <property type="molecule type" value="Genomic_DNA"/>
</dbReference>
<dbReference type="EMBL" id="CH466525">
    <property type="protein sequence ID" value="EDL11712.1"/>
    <property type="molecule type" value="Genomic_DNA"/>
</dbReference>
<dbReference type="CCDS" id="CCDS22750.1"/>
<dbReference type="PIR" id="S33757">
    <property type="entry name" value="S33757"/>
</dbReference>
<dbReference type="RefSeq" id="NP_001403941.1">
    <property type="nucleotide sequence ID" value="NM_001417012.1"/>
</dbReference>
<dbReference type="RefSeq" id="NP_031902.2">
    <property type="nucleotide sequence ID" value="NM_007876.3"/>
</dbReference>
<dbReference type="RefSeq" id="XP_017168047.1">
    <property type="nucleotide sequence ID" value="XM_017312558.1"/>
</dbReference>
<dbReference type="SMR" id="P31428"/>
<dbReference type="BioGRID" id="199297">
    <property type="interactions" value="1"/>
</dbReference>
<dbReference type="FunCoup" id="P31428">
    <property type="interactions" value="8"/>
</dbReference>
<dbReference type="IntAct" id="P31428">
    <property type="interactions" value="1"/>
</dbReference>
<dbReference type="STRING" id="10090.ENSMUSP00000019422"/>
<dbReference type="SwissLipids" id="SLP:000001461"/>
<dbReference type="MEROPS" id="M19.001"/>
<dbReference type="GlyCosmos" id="P31428">
    <property type="glycosylation" value="3 sites, 24 glycans"/>
</dbReference>
<dbReference type="GlyGen" id="P31428">
    <property type="glycosylation" value="3 sites"/>
</dbReference>
<dbReference type="PhosphoSitePlus" id="P31428"/>
<dbReference type="SwissPalm" id="P31428"/>
<dbReference type="jPOST" id="P31428"/>
<dbReference type="PaxDb" id="10090-ENSMUSP00000019422"/>
<dbReference type="PeptideAtlas" id="P31428"/>
<dbReference type="ProteomicsDB" id="279563"/>
<dbReference type="Pumba" id="P31428"/>
<dbReference type="Antibodypedia" id="1973">
    <property type="antibodies" value="221 antibodies from 28 providers"/>
</dbReference>
<dbReference type="DNASU" id="13479"/>
<dbReference type="Ensembl" id="ENSMUST00000019422.6">
    <property type="protein sequence ID" value="ENSMUSP00000019422.5"/>
    <property type="gene ID" value="ENSMUSG00000019278.6"/>
</dbReference>
<dbReference type="GeneID" id="13479"/>
<dbReference type="KEGG" id="mmu:13479"/>
<dbReference type="UCSC" id="uc009nui.2">
    <property type="organism name" value="mouse"/>
</dbReference>
<dbReference type="AGR" id="MGI:94917"/>
<dbReference type="CTD" id="1800"/>
<dbReference type="MGI" id="MGI:94917">
    <property type="gene designation" value="Dpep1"/>
</dbReference>
<dbReference type="VEuPathDB" id="HostDB:ENSMUSG00000019278"/>
<dbReference type="eggNOG" id="KOG4127">
    <property type="taxonomic scope" value="Eukaryota"/>
</dbReference>
<dbReference type="GeneTree" id="ENSGT00940000159615"/>
<dbReference type="HOGENOM" id="CLU_031404_4_2_1"/>
<dbReference type="InParanoid" id="P31428"/>
<dbReference type="OMA" id="CDHPRNI"/>
<dbReference type="OrthoDB" id="445695at2759"/>
<dbReference type="PhylomeDB" id="P31428"/>
<dbReference type="TreeFam" id="TF324523"/>
<dbReference type="Reactome" id="R-MMU-2142691">
    <property type="pathway name" value="Synthesis of Leukotrienes (LT) and Eoxins (EX)"/>
</dbReference>
<dbReference type="Reactome" id="R-MMU-5423646">
    <property type="pathway name" value="Aflatoxin activation and detoxification"/>
</dbReference>
<dbReference type="BioGRID-ORCS" id="13479">
    <property type="hits" value="3 hits in 84 CRISPR screens"/>
</dbReference>
<dbReference type="ChiTaRS" id="Dpep1">
    <property type="organism name" value="mouse"/>
</dbReference>
<dbReference type="PRO" id="PR:P31428"/>
<dbReference type="Proteomes" id="UP000000589">
    <property type="component" value="Chromosome 8"/>
</dbReference>
<dbReference type="RNAct" id="P31428">
    <property type="molecule type" value="protein"/>
</dbReference>
<dbReference type="Bgee" id="ENSMUSG00000019278">
    <property type="expression patterns" value="Expressed in aorta tunica adventitia and 155 other cell types or tissues"/>
</dbReference>
<dbReference type="ExpressionAtlas" id="P31428">
    <property type="expression patterns" value="baseline and differential"/>
</dbReference>
<dbReference type="GO" id="GO:0045177">
    <property type="term" value="C:apical part of cell"/>
    <property type="evidence" value="ECO:0000250"/>
    <property type="project" value="UniProtKB"/>
</dbReference>
<dbReference type="GO" id="GO:0016324">
    <property type="term" value="C:apical plasma membrane"/>
    <property type="evidence" value="ECO:0007669"/>
    <property type="project" value="UniProtKB-SubCell"/>
</dbReference>
<dbReference type="GO" id="GO:0030054">
    <property type="term" value="C:cell junction"/>
    <property type="evidence" value="ECO:0007669"/>
    <property type="project" value="Ensembl"/>
</dbReference>
<dbReference type="GO" id="GO:0005615">
    <property type="term" value="C:extracellular space"/>
    <property type="evidence" value="ECO:0000250"/>
    <property type="project" value="UniProtKB"/>
</dbReference>
<dbReference type="GO" id="GO:0031528">
    <property type="term" value="C:microvillus membrane"/>
    <property type="evidence" value="ECO:0007669"/>
    <property type="project" value="UniProtKB-SubCell"/>
</dbReference>
<dbReference type="GO" id="GO:0005654">
    <property type="term" value="C:nucleoplasm"/>
    <property type="evidence" value="ECO:0007669"/>
    <property type="project" value="Ensembl"/>
</dbReference>
<dbReference type="GO" id="GO:0005886">
    <property type="term" value="C:plasma membrane"/>
    <property type="evidence" value="ECO:0000250"/>
    <property type="project" value="UniProtKB"/>
</dbReference>
<dbReference type="GO" id="GO:0098552">
    <property type="term" value="C:side of membrane"/>
    <property type="evidence" value="ECO:0007669"/>
    <property type="project" value="UniProtKB-KW"/>
</dbReference>
<dbReference type="GO" id="GO:0008800">
    <property type="term" value="F:beta-lactamase activity"/>
    <property type="evidence" value="ECO:0000314"/>
    <property type="project" value="UniProtKB"/>
</dbReference>
<dbReference type="GO" id="GO:0016805">
    <property type="term" value="F:dipeptidase activity"/>
    <property type="evidence" value="ECO:0000314"/>
    <property type="project" value="UniProtKB"/>
</dbReference>
<dbReference type="GO" id="GO:0034235">
    <property type="term" value="F:GPI anchor binding"/>
    <property type="evidence" value="ECO:0000250"/>
    <property type="project" value="UniProtKB"/>
</dbReference>
<dbReference type="GO" id="GO:0070573">
    <property type="term" value="F:metallodipeptidase activity"/>
    <property type="evidence" value="ECO:0000250"/>
    <property type="project" value="UniProtKB"/>
</dbReference>
<dbReference type="GO" id="GO:0072341">
    <property type="term" value="F:modified amino acid binding"/>
    <property type="evidence" value="ECO:0000250"/>
    <property type="project" value="UniProtKB"/>
</dbReference>
<dbReference type="GO" id="GO:0008270">
    <property type="term" value="F:zinc ion binding"/>
    <property type="evidence" value="ECO:0000250"/>
    <property type="project" value="UniProtKB"/>
</dbReference>
<dbReference type="GO" id="GO:0016999">
    <property type="term" value="P:antibiotic metabolic process"/>
    <property type="evidence" value="ECO:0000314"/>
    <property type="project" value="UniProtKB"/>
</dbReference>
<dbReference type="GO" id="GO:0071277">
    <property type="term" value="P:cellular response to calcium ion"/>
    <property type="evidence" value="ECO:0000250"/>
    <property type="project" value="UniProtKB"/>
</dbReference>
<dbReference type="GO" id="GO:0071732">
    <property type="term" value="P:cellular response to nitric oxide"/>
    <property type="evidence" value="ECO:0000250"/>
    <property type="project" value="UniProtKB"/>
</dbReference>
<dbReference type="GO" id="GO:0006751">
    <property type="term" value="P:glutathione catabolic process"/>
    <property type="evidence" value="ECO:0000315"/>
    <property type="project" value="UniProtKB"/>
</dbReference>
<dbReference type="GO" id="GO:0050667">
    <property type="term" value="P:homocysteine metabolic process"/>
    <property type="evidence" value="ECO:0000250"/>
    <property type="project" value="UniProtKB"/>
</dbReference>
<dbReference type="GO" id="GO:0006954">
    <property type="term" value="P:inflammatory response"/>
    <property type="evidence" value="ECO:0000315"/>
    <property type="project" value="UniProtKB"/>
</dbReference>
<dbReference type="GO" id="GO:1901749">
    <property type="term" value="P:leukotriene D4 catabolic process"/>
    <property type="evidence" value="ECO:0000250"/>
    <property type="project" value="UniProtKB"/>
</dbReference>
<dbReference type="GO" id="GO:0006691">
    <property type="term" value="P:leukotriene metabolic process"/>
    <property type="evidence" value="ECO:0000314"/>
    <property type="project" value="UniProtKB"/>
</dbReference>
<dbReference type="GO" id="GO:0030336">
    <property type="term" value="P:negative regulation of cell migration"/>
    <property type="evidence" value="ECO:0000250"/>
    <property type="project" value="UniProtKB"/>
</dbReference>
<dbReference type="GO" id="GO:0030593">
    <property type="term" value="P:neutrophil chemotaxis"/>
    <property type="evidence" value="ECO:0000315"/>
    <property type="project" value="UniProtKB"/>
</dbReference>
<dbReference type="GO" id="GO:0006508">
    <property type="term" value="P:proteolysis"/>
    <property type="evidence" value="ECO:0007669"/>
    <property type="project" value="UniProtKB-KW"/>
</dbReference>
<dbReference type="CDD" id="cd01301">
    <property type="entry name" value="rDP_like"/>
    <property type="match status" value="1"/>
</dbReference>
<dbReference type="FunFam" id="3.20.20.140:FF:000030">
    <property type="entry name" value="Dipeptidase"/>
    <property type="match status" value="1"/>
</dbReference>
<dbReference type="Gene3D" id="3.20.20.140">
    <property type="entry name" value="Metal-dependent hydrolases"/>
    <property type="match status" value="1"/>
</dbReference>
<dbReference type="InterPro" id="IPR000180">
    <property type="entry name" value="Dipep_AS"/>
</dbReference>
<dbReference type="InterPro" id="IPR032466">
    <property type="entry name" value="Metal_Hydrolase"/>
</dbReference>
<dbReference type="InterPro" id="IPR008257">
    <property type="entry name" value="Pept_M19"/>
</dbReference>
<dbReference type="PANTHER" id="PTHR10443:SF38">
    <property type="entry name" value="DIPEPTIDASE 1"/>
    <property type="match status" value="1"/>
</dbReference>
<dbReference type="PANTHER" id="PTHR10443">
    <property type="entry name" value="MICROSOMAL DIPEPTIDASE"/>
    <property type="match status" value="1"/>
</dbReference>
<dbReference type="Pfam" id="PF01244">
    <property type="entry name" value="Peptidase_M19"/>
    <property type="match status" value="1"/>
</dbReference>
<dbReference type="SUPFAM" id="SSF51556">
    <property type="entry name" value="Metallo-dependent hydrolases"/>
    <property type="match status" value="1"/>
</dbReference>
<dbReference type="PROSITE" id="PS00869">
    <property type="entry name" value="RENAL_DIPEPTIDASE_1"/>
    <property type="match status" value="1"/>
</dbReference>
<dbReference type="PROSITE" id="PS51365">
    <property type="entry name" value="RENAL_DIPEPTIDASE_2"/>
    <property type="match status" value="1"/>
</dbReference>
<comment type="function">
    <text evidence="7 8 9">Hydrolyzes a wide range of dipeptides including the conversion of leukotriene D4 to leukotriene E4 (PubMed:12738806, PubMed:31442408, PubMed:9560193). Hydrolyzes cystinyl-bis-glycine (cys-bis-gly) formed during glutathione degradation (PubMed:12738806, PubMed:9560193). Also possesses beta lactamase activity and hydrolytically inactivates beta-lactam antibiotics (PubMed:12738806).</text>
</comment>
<comment type="function">
    <text evidence="8">Independently of its dipeptidase activity, acts as an adhesion receptor for neutrophil recruitment from bloodstream into inflamed lungs and liver.</text>
</comment>
<comment type="catalytic activity">
    <reaction evidence="6 7 8">
        <text>an L-aminoacyl-L-amino acid + H2O = 2 an L-alpha-amino acid</text>
        <dbReference type="Rhea" id="RHEA:48940"/>
        <dbReference type="ChEBI" id="CHEBI:15377"/>
        <dbReference type="ChEBI" id="CHEBI:59869"/>
        <dbReference type="ChEBI" id="CHEBI:77460"/>
        <dbReference type="EC" id="3.4.13.19"/>
    </reaction>
</comment>
<comment type="catalytic activity">
    <reaction evidence="7">
        <text>leukotriene D4 + H2O = leukotriene E4 + glycine</text>
        <dbReference type="Rhea" id="RHEA:48616"/>
        <dbReference type="ChEBI" id="CHEBI:15377"/>
        <dbReference type="ChEBI" id="CHEBI:57305"/>
        <dbReference type="ChEBI" id="CHEBI:57462"/>
        <dbReference type="ChEBI" id="CHEBI:63166"/>
    </reaction>
</comment>
<comment type="catalytic activity">
    <reaction evidence="7">
        <text>L-cystine-bis-glycine + 2 H2O = L-cystine + 2 glycine</text>
        <dbReference type="Rhea" id="RHEA:60520"/>
        <dbReference type="ChEBI" id="CHEBI:15377"/>
        <dbReference type="ChEBI" id="CHEBI:35491"/>
        <dbReference type="ChEBI" id="CHEBI:57305"/>
        <dbReference type="ChEBI" id="CHEBI:143812"/>
    </reaction>
</comment>
<comment type="catalytic activity">
    <reaction evidence="7">
        <text>a beta-lactam + H2O = a substituted beta-amino acid</text>
        <dbReference type="Rhea" id="RHEA:20401"/>
        <dbReference type="ChEBI" id="CHEBI:15377"/>
        <dbReference type="ChEBI" id="CHEBI:35627"/>
        <dbReference type="ChEBI" id="CHEBI:140347"/>
        <dbReference type="EC" id="3.5.2.6"/>
    </reaction>
</comment>
<comment type="catalytic activity">
    <reaction evidence="8">
        <text>glycyldehydrophenylalanine + H2O = 2,3-didehydrophenylalanine + glycine</text>
        <dbReference type="Rhea" id="RHEA:62704"/>
        <dbReference type="ChEBI" id="CHEBI:15377"/>
        <dbReference type="ChEBI" id="CHEBI:57305"/>
        <dbReference type="ChEBI" id="CHEBI:145925"/>
        <dbReference type="ChEBI" id="CHEBI:145926"/>
    </reaction>
</comment>
<comment type="cofactor">
    <cofactor evidence="2 6">
        <name>Zn(2+)</name>
        <dbReference type="ChEBI" id="CHEBI:29105"/>
    </cofactor>
</comment>
<comment type="activity regulation">
    <text evidence="2">Inhibited by L-penicillamine. Inhibited by cilastatin.</text>
</comment>
<comment type="biophysicochemical properties">
    <kinetics>
        <KM evidence="7">10 uM for leukotriene D4</KM>
        <KM evidence="7">0.45 mM for cystinyl-bis-glycine</KM>
        <KM evidence="7">111 uM for beta-lactam</KM>
    </kinetics>
</comment>
<comment type="subunit">
    <text evidence="2">Homodimer; disulfide-linked.</text>
</comment>
<comment type="subcellular location">
    <subcellularLocation>
        <location evidence="2">Apical cell membrane</location>
        <topology evidence="2">Lipid-anchor</topology>
        <topology evidence="2">GPI-anchor</topology>
    </subcellularLocation>
    <subcellularLocation>
        <location evidence="2">Cell projection</location>
        <location evidence="2">Microvillus membrane</location>
        <topology evidence="2">Lipid-anchor</topology>
        <topology evidence="2">GPI-anchor</topology>
    </subcellularLocation>
    <text evidence="4">Brush border membrane.</text>
</comment>
<comment type="tissue specificity">
    <text evidence="7 8">Expressed in heart, lung, skeletal muscle, kidney, liver, and testis. Not detected in brain and spleen.</text>
</comment>
<comment type="disruption phenotype">
    <text evidence="8 9">Deficient mice are phenotypically normal. However deficient mice display a partial loss in the conversion of leukotriene D4 to leukotrience E4 and in the conversion of cys-bis-gly to cysteine and glycine (PubMed:9560193). Deficient mice display reduces mortality in models of sepsis (PubMed:31442408).</text>
</comment>
<comment type="similarity">
    <text evidence="6">Belongs to the metallo-dependent hydrolases superfamily. Peptidase M19 family.</text>
</comment>
<feature type="signal peptide" evidence="2">
    <location>
        <begin position="1"/>
        <end position="16"/>
    </location>
</feature>
<feature type="chain" id="PRO_0000018654" description="Dipeptidase 1">
    <location>
        <begin position="17"/>
        <end position="384"/>
    </location>
</feature>
<feature type="propeptide" id="PRO_0000018655" description="Removed in mature form" evidence="2">
    <location>
        <begin position="385"/>
        <end position="410"/>
    </location>
</feature>
<feature type="binding site" evidence="6">
    <location>
        <position position="36"/>
    </location>
    <ligand>
        <name>Zn(2+)</name>
        <dbReference type="ChEBI" id="CHEBI:29105"/>
        <label>1</label>
        <note>catalytic</note>
    </ligand>
</feature>
<feature type="binding site" evidence="6">
    <location>
        <position position="38"/>
    </location>
    <ligand>
        <name>Zn(2+)</name>
        <dbReference type="ChEBI" id="CHEBI:29105"/>
        <label>1</label>
        <note>catalytic</note>
    </ligand>
</feature>
<feature type="binding site" evidence="6">
    <location>
        <position position="141"/>
    </location>
    <ligand>
        <name>Zn(2+)</name>
        <dbReference type="ChEBI" id="CHEBI:29105"/>
        <label>1</label>
        <note>catalytic</note>
    </ligand>
</feature>
<feature type="binding site" evidence="6">
    <location>
        <position position="141"/>
    </location>
    <ligand>
        <name>Zn(2+)</name>
        <dbReference type="ChEBI" id="CHEBI:29105"/>
        <label>2</label>
        <note>catalytic</note>
    </ligand>
</feature>
<feature type="binding site" evidence="6">
    <location>
        <position position="168"/>
    </location>
    <ligand>
        <name>substrate</name>
    </ligand>
</feature>
<feature type="binding site" evidence="6">
    <location>
        <position position="214"/>
    </location>
    <ligand>
        <name>Zn(2+)</name>
        <dbReference type="ChEBI" id="CHEBI:29105"/>
        <label>2</label>
        <note>catalytic</note>
    </ligand>
</feature>
<feature type="binding site" evidence="6">
    <location>
        <position position="235"/>
    </location>
    <ligand>
        <name>Zn(2+)</name>
        <dbReference type="ChEBI" id="CHEBI:29105"/>
        <label>2</label>
        <note>catalytic</note>
    </ligand>
</feature>
<feature type="binding site" evidence="6">
    <location>
        <position position="246"/>
    </location>
    <ligand>
        <name>substrate</name>
    </ligand>
</feature>
<feature type="binding site" evidence="6">
    <location>
        <position position="304"/>
    </location>
    <ligand>
        <name>substrate</name>
    </ligand>
</feature>
<feature type="lipid moiety-binding region" description="GPI-anchor amidated serine" evidence="3">
    <location>
        <position position="384"/>
    </location>
</feature>
<feature type="glycosylation site" description="N-linked (GlcNAc...) asparagine" evidence="5">
    <location>
        <position position="121"/>
    </location>
</feature>
<feature type="glycosylation site" description="N-linked (GlcNAc...) asparagine" evidence="5">
    <location>
        <position position="258"/>
    </location>
</feature>
<feature type="glycosylation site" description="N-linked (GlcNAc...) asparagine" evidence="1">
    <location>
        <position position="332"/>
    </location>
</feature>
<feature type="disulfide bond" evidence="6">
    <location>
        <begin position="87"/>
        <end position="170"/>
    </location>
</feature>
<feature type="disulfide bond" evidence="6">
    <location>
        <begin position="242"/>
        <end position="274"/>
    </location>
</feature>
<feature type="disulfide bond" description="Interchain" evidence="6">
    <location>
        <position position="377"/>
    </location>
</feature>
<feature type="sequence conflict" description="In Ref. 1; BAA02432." evidence="12" ref="1">
    <original>N</original>
    <variation>T</variation>
    <location>
        <position position="204"/>
    </location>
</feature>
<feature type="sequence conflict" description="In Ref. 1; BAA02432." evidence="12" ref="1">
    <original>N</original>
    <variation>S</variation>
    <location>
        <position position="358"/>
    </location>
</feature>
<proteinExistence type="evidence at protein level"/>
<reference key="1">
    <citation type="journal article" date="1993" name="Biochim. Biophys. Acta">
        <title>Purification and molecular cloning of mouse renal dipeptidase.</title>
        <authorList>
            <person name="Satoh S."/>
            <person name="Keida Y."/>
            <person name="Konta Y."/>
            <person name="Maeda M."/>
            <person name="Matsumoto Y."/>
            <person name="Niwa M."/>
            <person name="Kohsaka M."/>
        </authorList>
    </citation>
    <scope>NUCLEOTIDE SEQUENCE [MRNA]</scope>
</reference>
<reference key="2">
    <citation type="journal article" date="2009" name="PLoS Biol.">
        <title>Lineage-specific biology revealed by a finished genome assembly of the mouse.</title>
        <authorList>
            <person name="Church D.M."/>
            <person name="Goodstadt L."/>
            <person name="Hillier L.W."/>
            <person name="Zody M.C."/>
            <person name="Goldstein S."/>
            <person name="She X."/>
            <person name="Bult C.J."/>
            <person name="Agarwala R."/>
            <person name="Cherry J.L."/>
            <person name="DiCuccio M."/>
            <person name="Hlavina W."/>
            <person name="Kapustin Y."/>
            <person name="Meric P."/>
            <person name="Maglott D."/>
            <person name="Birtle Z."/>
            <person name="Marques A.C."/>
            <person name="Graves T."/>
            <person name="Zhou S."/>
            <person name="Teague B."/>
            <person name="Potamousis K."/>
            <person name="Churas C."/>
            <person name="Place M."/>
            <person name="Herschleb J."/>
            <person name="Runnheim R."/>
            <person name="Forrest D."/>
            <person name="Amos-Landgraf J."/>
            <person name="Schwartz D.C."/>
            <person name="Cheng Z."/>
            <person name="Lindblad-Toh K."/>
            <person name="Eichler E.E."/>
            <person name="Ponting C.P."/>
        </authorList>
    </citation>
    <scope>NUCLEOTIDE SEQUENCE [LARGE SCALE GENOMIC DNA]</scope>
    <source>
        <strain>C57BL/6J</strain>
    </source>
</reference>
<reference key="3">
    <citation type="submission" date="2005-07" db="EMBL/GenBank/DDBJ databases">
        <authorList>
            <person name="Mural R.J."/>
            <person name="Adams M.D."/>
            <person name="Myers E.W."/>
            <person name="Smith H.O."/>
            <person name="Venter J.C."/>
        </authorList>
    </citation>
    <scope>NUCLEOTIDE SEQUENCE [LARGE SCALE GENOMIC DNA]</scope>
</reference>
<reference key="4">
    <citation type="journal article" date="1998" name="Proc. Natl. Acad. Sci. U.S.A.">
        <title>Leukotriene D4 and cystinyl-bis-glycine metabolism in membrane-bound dipeptidase-deficient mice.</title>
        <authorList>
            <person name="Habib G.M."/>
            <person name="Shi Z.Z."/>
            <person name="Cuevas A.A."/>
            <person name="Guo Q."/>
            <person name="Matzuk M.M."/>
            <person name="Lieberman M.W."/>
        </authorList>
    </citation>
    <scope>DISRUPTION PHENOTYPE</scope>
    <scope>FUNCTION</scope>
</reference>
<reference key="5">
    <citation type="journal article" date="2003" name="FASEB J.">
        <title>Identification of two additional members of the membrane-bound dipeptidase family.</title>
        <authorList>
            <person name="Habib G.M."/>
            <person name="Shi Z.-Z."/>
            <person name="Cuevas A.A."/>
            <person name="Lieberman M.W."/>
        </authorList>
    </citation>
    <scope>BIOPHYSICOCHEMICAL PROPERTIES</scope>
    <scope>ACTIVITY REGULATION</scope>
    <scope>CATALYTIC ACTIVITY</scope>
    <scope>TISSUE SPECIFICITY</scope>
</reference>
<reference key="6">
    <citation type="journal article" date="2010" name="Cell">
        <title>A tissue-specific atlas of mouse protein phosphorylation and expression.</title>
        <authorList>
            <person name="Huttlin E.L."/>
            <person name="Jedrychowski M.P."/>
            <person name="Elias J.E."/>
            <person name="Goswami T."/>
            <person name="Rad R."/>
            <person name="Beausoleil S.A."/>
            <person name="Villen J."/>
            <person name="Haas W."/>
            <person name="Sowa M.E."/>
            <person name="Gygi S.P."/>
        </authorList>
    </citation>
    <scope>IDENTIFICATION BY MASS SPECTROMETRY [LARGE SCALE ANALYSIS]</scope>
    <source>
        <tissue>Heart</tissue>
        <tissue>Kidney</tissue>
        <tissue>Lung</tissue>
        <tissue>Pancreas</tissue>
        <tissue>Testis</tissue>
    </source>
</reference>
<reference key="7">
    <citation type="journal article" date="2019" name="Cell">
        <title>Dipeptidase-1 is an adhesion receptor for neutrophil recruitment in lungs and liver.</title>
        <authorList>
            <person name="Choudhury S.R."/>
            <person name="Babes L."/>
            <person name="Rahn J.J."/>
            <person name="Ahn B.Y."/>
            <person name="Goring K.R."/>
            <person name="King J.C."/>
            <person name="Lau A."/>
            <person name="Petri B."/>
            <person name="Hao X."/>
            <person name="Chojnacki A.K."/>
            <person name="Thanabalasuriar A."/>
            <person name="McAvoy E.F."/>
            <person name="Tabaries S."/>
            <person name="Schraeder C."/>
            <person name="Patel K.D."/>
            <person name="Siegel P.M."/>
            <person name="Kopciuk K.A."/>
            <person name="Schriemer D.C."/>
            <person name="Muruve D.A."/>
            <person name="Kelly M.M."/>
            <person name="Yipp B.G."/>
            <person name="Kubes P."/>
            <person name="Robbins S.M."/>
            <person name="Senger D.L."/>
        </authorList>
    </citation>
    <scope>DISRUPTION PHENOTYPE</scope>
    <scope>TISSUE SPECIFICITY</scope>
    <scope>FUNCTION</scope>
    <scope>CATALYTIC ACTIVITY</scope>
</reference>
<accession>P31428</accession>
<accession>G5E824</accession>
<keyword id="KW-1003">Cell membrane</keyword>
<keyword id="KW-0966">Cell projection</keyword>
<keyword id="KW-0224">Dipeptidase</keyword>
<keyword id="KW-1015">Disulfide bond</keyword>
<keyword id="KW-0325">Glycoprotein</keyword>
<keyword id="KW-0336">GPI-anchor</keyword>
<keyword id="KW-0378">Hydrolase</keyword>
<keyword id="KW-0443">Lipid metabolism</keyword>
<keyword id="KW-0449">Lipoprotein</keyword>
<keyword id="KW-0472">Membrane</keyword>
<keyword id="KW-0479">Metal-binding</keyword>
<keyword id="KW-0482">Metalloprotease</keyword>
<keyword id="KW-0645">Protease</keyword>
<keyword id="KW-1185">Reference proteome</keyword>
<keyword id="KW-0732">Signal</keyword>
<keyword id="KW-0862">Zinc</keyword>
<sequence length="410" mass="45722">MVIIWWFWSLLAICASDSFRDQAVAIMRTTPVIDGHNDLPWQLLNLFNNQLLRPDADLNKLAQTHTNIPKLKAGFVGGQFWSAYMPCDTQNKDAVKRILEQMDVIHRMCQLYPETFMCVTNSSDILQAFRRGKVASLIGVEGGHLIDSSLGVLRTLYHLGMRYLTLTHNCNTPWADNWLVDRGDDEAESHGLSPFGKRLLNEMNRLGVMIDLSHVSVATMKDALQISRAPVIFSHSSAYSLCPHRRNVPDDVLQLVKNTSSLVMVNFFSNFVSCSDSATLPQVADHLDHIKKVAGAGAVGLGGDYDGVTMLPVGLEDVSKYPDLIAELLRRNWTETEVRGLLADNLIRVFSEVELVSNNMQSPEEVPITLKELDGSCRTYYGYSQAHSIHLQTGALVASLASLLFRLHLL</sequence>
<evidence type="ECO:0000250" key="1"/>
<evidence type="ECO:0000250" key="2">
    <source>
        <dbReference type="UniProtKB" id="P16444"/>
    </source>
</evidence>
<evidence type="ECO:0000250" key="3">
    <source>
        <dbReference type="UniProtKB" id="P22412"/>
    </source>
</evidence>
<evidence type="ECO:0000250" key="4">
    <source>
        <dbReference type="UniProtKB" id="P31429"/>
    </source>
</evidence>
<evidence type="ECO:0000255" key="5"/>
<evidence type="ECO:0000255" key="6">
    <source>
        <dbReference type="PROSITE-ProRule" id="PRU10073"/>
    </source>
</evidence>
<evidence type="ECO:0000269" key="7">
    <source>
    </source>
</evidence>
<evidence type="ECO:0000269" key="8">
    <source>
    </source>
</evidence>
<evidence type="ECO:0000269" key="9">
    <source>
    </source>
</evidence>
<evidence type="ECO:0000303" key="10">
    <source>
    </source>
</evidence>
<evidence type="ECO:0000303" key="11">
    <source>
    </source>
</evidence>
<evidence type="ECO:0000305" key="12"/>
<organism>
    <name type="scientific">Mus musculus</name>
    <name type="common">Mouse</name>
    <dbReference type="NCBI Taxonomy" id="10090"/>
    <lineage>
        <taxon>Eukaryota</taxon>
        <taxon>Metazoa</taxon>
        <taxon>Chordata</taxon>
        <taxon>Craniata</taxon>
        <taxon>Vertebrata</taxon>
        <taxon>Euteleostomi</taxon>
        <taxon>Mammalia</taxon>
        <taxon>Eutheria</taxon>
        <taxon>Euarchontoglires</taxon>
        <taxon>Glires</taxon>
        <taxon>Rodentia</taxon>
        <taxon>Myomorpha</taxon>
        <taxon>Muroidea</taxon>
        <taxon>Muridae</taxon>
        <taxon>Murinae</taxon>
        <taxon>Mus</taxon>
        <taxon>Mus</taxon>
    </lineage>
</organism>
<name>DPEP1_MOUSE</name>
<protein>
    <recommendedName>
        <fullName>Dipeptidase 1</fullName>
        <shortName>DPEP-1</shortName>
        <ecNumber evidence="7 8">3.4.13.19</ecNumber>
    </recommendedName>
    <alternativeName>
        <fullName evidence="12">Beta-lactamase</fullName>
        <ecNumber evidence="7">3.5.2.6</ecNumber>
    </alternativeName>
    <alternativeName>
        <fullName evidence="10">Membrane-bound dipeptidase 1</fullName>
        <shortName evidence="10">MBD-1</shortName>
    </alternativeName>
    <alternativeName>
        <fullName>Microsomal dipeptidase</fullName>
    </alternativeName>
    <alternativeName>
        <fullName evidence="11">Renal dipeptidase</fullName>
    </alternativeName>
</protein>
<gene>
    <name type="primary">Dpep1</name>
    <name type="synonym">Mbd1</name>
    <name type="synonym">Rdp</name>
</gene>